<evidence type="ECO:0000250" key="1"/>
<evidence type="ECO:0000255" key="2">
    <source>
        <dbReference type="HAMAP-Rule" id="MF_00100"/>
    </source>
</evidence>
<evidence type="ECO:0000256" key="3">
    <source>
        <dbReference type="SAM" id="MobiDB-lite"/>
    </source>
</evidence>
<protein>
    <recommendedName>
        <fullName evidence="2">Translation initiation factor IF-2</fullName>
    </recommendedName>
</protein>
<feature type="chain" id="PRO_0000228181" description="Translation initiation factor IF-2">
    <location>
        <begin position="1"/>
        <end position="827"/>
    </location>
</feature>
<feature type="domain" description="tr-type G">
    <location>
        <begin position="326"/>
        <end position="495"/>
    </location>
</feature>
<feature type="region of interest" description="Disordered" evidence="3">
    <location>
        <begin position="49"/>
        <end position="205"/>
    </location>
</feature>
<feature type="region of interest" description="G1" evidence="1">
    <location>
        <begin position="335"/>
        <end position="342"/>
    </location>
</feature>
<feature type="region of interest" description="G2" evidence="1">
    <location>
        <begin position="360"/>
        <end position="364"/>
    </location>
</feature>
<feature type="region of interest" description="G3" evidence="1">
    <location>
        <begin position="381"/>
        <end position="384"/>
    </location>
</feature>
<feature type="region of interest" description="G4" evidence="1">
    <location>
        <begin position="435"/>
        <end position="438"/>
    </location>
</feature>
<feature type="region of interest" description="G5" evidence="1">
    <location>
        <begin position="471"/>
        <end position="473"/>
    </location>
</feature>
<feature type="compositionally biased region" description="Basic and acidic residues" evidence="3">
    <location>
        <begin position="50"/>
        <end position="73"/>
    </location>
</feature>
<feature type="compositionally biased region" description="Basic and acidic residues" evidence="3">
    <location>
        <begin position="96"/>
        <end position="106"/>
    </location>
</feature>
<feature type="compositionally biased region" description="Basic and acidic residues" evidence="3">
    <location>
        <begin position="116"/>
        <end position="129"/>
    </location>
</feature>
<feature type="compositionally biased region" description="Basic and acidic residues" evidence="3">
    <location>
        <begin position="137"/>
        <end position="150"/>
    </location>
</feature>
<feature type="compositionally biased region" description="Basic and acidic residues" evidence="3">
    <location>
        <begin position="157"/>
        <end position="168"/>
    </location>
</feature>
<feature type="compositionally biased region" description="Basic and acidic residues" evidence="3">
    <location>
        <begin position="182"/>
        <end position="205"/>
    </location>
</feature>
<feature type="binding site" evidence="2">
    <location>
        <begin position="335"/>
        <end position="342"/>
    </location>
    <ligand>
        <name>GTP</name>
        <dbReference type="ChEBI" id="CHEBI:37565"/>
    </ligand>
</feature>
<feature type="binding site" evidence="2">
    <location>
        <begin position="381"/>
        <end position="385"/>
    </location>
    <ligand>
        <name>GTP</name>
        <dbReference type="ChEBI" id="CHEBI:37565"/>
    </ligand>
</feature>
<feature type="binding site" evidence="2">
    <location>
        <begin position="435"/>
        <end position="438"/>
    </location>
    <ligand>
        <name>GTP</name>
        <dbReference type="ChEBI" id="CHEBI:37565"/>
    </ligand>
</feature>
<sequence length="827" mass="92574">MRKKRVFEIAKELNMESKEVINRLKAIGVEVKSHMSTVENHHLNLLLKALNREKEEKEKKEQEKKQVEQKAEAQKLQSHPQRPKEQQQSKQGGQSRPREQRSDRPQGQRYAGNQRPEPRDKDKGRRPGEQRSFNQNRPRDDRRRFDKERGVQGPKPFGEKKERPPFPREKKKGVLPAIPKPEAPKGENKEPERRKGAPDKKREWEKALKKEEKVFALEEKKLNLKKEKKQEKQEKQEPVAAEPKAIVIPERMTVQEFAKIMGKSAAEVIKKLMSYGILATINQEIDADTATIIATDFGYEVTVEKEEKEDIWLLEETPDDPESLEPRPPIVTVMGHVDHGKTSLLDAIRQTNVTATEAGGITQHIGAYQVEHNGRKITFIDTPGHEAFTAMRARGAQVTDIAILVVAADDGVMPQTVEAINHAKAAGVPIIVAVNKIDKPNAQPDRVKQQLTEYGLIPEAWGGDTVFVEVSALKKIGIEELLEMILLVADLKELKANPNKPARGTVIEAKLDKGRGPVATVLVQSGTLNVGDVVVVGLTYGRVRALMDDKGRRVKKATPSMPVEVLGLNDVPSAGDILVVVDDEKTARTLAEKRQEQKREEELRASSKVSLEDLFKHIQEGKIKELNIVLKADVHGSVEAIKQSLSRLSTEEVKVNVIHSGVGAITETDIMLASASNAIVIGFNVRPDSNARKLAETEKIDVRVYRIIYELLDDIKAAMAGLLEPEQKEVVLGRAEVRKTFKASKVGTIAGLYVLEGKITRSAKVRVIRDGIVIHEGNVESLKRFKDDVREVAQGYECGLTIEKFNDIREGDIIEAFTIEEVKRTLE</sequence>
<proteinExistence type="inferred from homology"/>
<gene>
    <name evidence="2" type="primary">infB</name>
    <name type="ordered locus">CHY_1766</name>
</gene>
<accession>Q3AB98</accession>
<reference key="1">
    <citation type="journal article" date="2005" name="PLoS Genet.">
        <title>Life in hot carbon monoxide: the complete genome sequence of Carboxydothermus hydrogenoformans Z-2901.</title>
        <authorList>
            <person name="Wu M."/>
            <person name="Ren Q."/>
            <person name="Durkin A.S."/>
            <person name="Daugherty S.C."/>
            <person name="Brinkac L.M."/>
            <person name="Dodson R.J."/>
            <person name="Madupu R."/>
            <person name="Sullivan S.A."/>
            <person name="Kolonay J.F."/>
            <person name="Nelson W.C."/>
            <person name="Tallon L.J."/>
            <person name="Jones K.M."/>
            <person name="Ulrich L.E."/>
            <person name="Gonzalez J.M."/>
            <person name="Zhulin I.B."/>
            <person name="Robb F.T."/>
            <person name="Eisen J.A."/>
        </authorList>
    </citation>
    <scope>NUCLEOTIDE SEQUENCE [LARGE SCALE GENOMIC DNA]</scope>
    <source>
        <strain>ATCC BAA-161 / DSM 6008 / Z-2901</strain>
    </source>
</reference>
<dbReference type="EMBL" id="CP000141">
    <property type="protein sequence ID" value="ABB14990.1"/>
    <property type="molecule type" value="Genomic_DNA"/>
</dbReference>
<dbReference type="RefSeq" id="WP_011344660.1">
    <property type="nucleotide sequence ID" value="NC_007503.1"/>
</dbReference>
<dbReference type="SMR" id="Q3AB98"/>
<dbReference type="FunCoup" id="Q3AB98">
    <property type="interactions" value="432"/>
</dbReference>
<dbReference type="STRING" id="246194.CHY_1766"/>
<dbReference type="KEGG" id="chy:CHY_1766"/>
<dbReference type="eggNOG" id="COG0532">
    <property type="taxonomic scope" value="Bacteria"/>
</dbReference>
<dbReference type="HOGENOM" id="CLU_006301_5_1_9"/>
<dbReference type="InParanoid" id="Q3AB98"/>
<dbReference type="OrthoDB" id="9811804at2"/>
<dbReference type="Proteomes" id="UP000002706">
    <property type="component" value="Chromosome"/>
</dbReference>
<dbReference type="GO" id="GO:0005829">
    <property type="term" value="C:cytosol"/>
    <property type="evidence" value="ECO:0007669"/>
    <property type="project" value="TreeGrafter"/>
</dbReference>
<dbReference type="GO" id="GO:0005525">
    <property type="term" value="F:GTP binding"/>
    <property type="evidence" value="ECO:0007669"/>
    <property type="project" value="UniProtKB-KW"/>
</dbReference>
<dbReference type="GO" id="GO:0003924">
    <property type="term" value="F:GTPase activity"/>
    <property type="evidence" value="ECO:0007669"/>
    <property type="project" value="UniProtKB-UniRule"/>
</dbReference>
<dbReference type="GO" id="GO:0003743">
    <property type="term" value="F:translation initiation factor activity"/>
    <property type="evidence" value="ECO:0007669"/>
    <property type="project" value="UniProtKB-UniRule"/>
</dbReference>
<dbReference type="CDD" id="cd01887">
    <property type="entry name" value="IF2_eIF5B"/>
    <property type="match status" value="1"/>
</dbReference>
<dbReference type="CDD" id="cd03702">
    <property type="entry name" value="IF2_mtIF2_II"/>
    <property type="match status" value="1"/>
</dbReference>
<dbReference type="CDD" id="cd03692">
    <property type="entry name" value="mtIF2_IVc"/>
    <property type="match status" value="1"/>
</dbReference>
<dbReference type="FunFam" id="2.40.30.10:FF:000007">
    <property type="entry name" value="Translation initiation factor IF-2"/>
    <property type="match status" value="1"/>
</dbReference>
<dbReference type="FunFam" id="2.40.30.10:FF:000008">
    <property type="entry name" value="Translation initiation factor IF-2"/>
    <property type="match status" value="1"/>
</dbReference>
<dbReference type="FunFam" id="3.40.50.10050:FF:000001">
    <property type="entry name" value="Translation initiation factor IF-2"/>
    <property type="match status" value="1"/>
</dbReference>
<dbReference type="FunFam" id="3.40.50.300:FF:000019">
    <property type="entry name" value="Translation initiation factor IF-2"/>
    <property type="match status" value="1"/>
</dbReference>
<dbReference type="Gene3D" id="1.10.10.2480">
    <property type="match status" value="1"/>
</dbReference>
<dbReference type="Gene3D" id="3.40.50.300">
    <property type="entry name" value="P-loop containing nucleotide triphosphate hydrolases"/>
    <property type="match status" value="1"/>
</dbReference>
<dbReference type="Gene3D" id="2.40.30.10">
    <property type="entry name" value="Translation factors"/>
    <property type="match status" value="2"/>
</dbReference>
<dbReference type="Gene3D" id="3.40.50.10050">
    <property type="entry name" value="Translation initiation factor IF- 2, domain 3"/>
    <property type="match status" value="1"/>
</dbReference>
<dbReference type="HAMAP" id="MF_00100_B">
    <property type="entry name" value="IF_2_B"/>
    <property type="match status" value="1"/>
</dbReference>
<dbReference type="InterPro" id="IPR053905">
    <property type="entry name" value="EF-G-like_DII"/>
</dbReference>
<dbReference type="InterPro" id="IPR044145">
    <property type="entry name" value="IF2_II"/>
</dbReference>
<dbReference type="InterPro" id="IPR006847">
    <property type="entry name" value="IF2_N"/>
</dbReference>
<dbReference type="InterPro" id="IPR027417">
    <property type="entry name" value="P-loop_NTPase"/>
</dbReference>
<dbReference type="InterPro" id="IPR005225">
    <property type="entry name" value="Small_GTP-bd"/>
</dbReference>
<dbReference type="InterPro" id="IPR000795">
    <property type="entry name" value="T_Tr_GTP-bd_dom"/>
</dbReference>
<dbReference type="InterPro" id="IPR000178">
    <property type="entry name" value="TF_IF2_bacterial-like"/>
</dbReference>
<dbReference type="InterPro" id="IPR015760">
    <property type="entry name" value="TIF_IF2"/>
</dbReference>
<dbReference type="InterPro" id="IPR023115">
    <property type="entry name" value="TIF_IF2_dom3"/>
</dbReference>
<dbReference type="InterPro" id="IPR036925">
    <property type="entry name" value="TIF_IF2_dom3_sf"/>
</dbReference>
<dbReference type="InterPro" id="IPR009000">
    <property type="entry name" value="Transl_B-barrel_sf"/>
</dbReference>
<dbReference type="NCBIfam" id="TIGR00487">
    <property type="entry name" value="IF-2"/>
    <property type="match status" value="1"/>
</dbReference>
<dbReference type="NCBIfam" id="TIGR00231">
    <property type="entry name" value="small_GTP"/>
    <property type="match status" value="1"/>
</dbReference>
<dbReference type="PANTHER" id="PTHR43381:SF5">
    <property type="entry name" value="TR-TYPE G DOMAIN-CONTAINING PROTEIN"/>
    <property type="match status" value="1"/>
</dbReference>
<dbReference type="PANTHER" id="PTHR43381">
    <property type="entry name" value="TRANSLATION INITIATION FACTOR IF-2-RELATED"/>
    <property type="match status" value="1"/>
</dbReference>
<dbReference type="Pfam" id="PF22042">
    <property type="entry name" value="EF-G_D2"/>
    <property type="match status" value="1"/>
</dbReference>
<dbReference type="Pfam" id="PF00009">
    <property type="entry name" value="GTP_EFTU"/>
    <property type="match status" value="1"/>
</dbReference>
<dbReference type="Pfam" id="PF11987">
    <property type="entry name" value="IF-2"/>
    <property type="match status" value="1"/>
</dbReference>
<dbReference type="Pfam" id="PF04760">
    <property type="entry name" value="IF2_N"/>
    <property type="match status" value="2"/>
</dbReference>
<dbReference type="SUPFAM" id="SSF52156">
    <property type="entry name" value="Initiation factor IF2/eIF5b, domain 3"/>
    <property type="match status" value="1"/>
</dbReference>
<dbReference type="SUPFAM" id="SSF52540">
    <property type="entry name" value="P-loop containing nucleoside triphosphate hydrolases"/>
    <property type="match status" value="1"/>
</dbReference>
<dbReference type="SUPFAM" id="SSF50447">
    <property type="entry name" value="Translation proteins"/>
    <property type="match status" value="2"/>
</dbReference>
<dbReference type="PROSITE" id="PS51722">
    <property type="entry name" value="G_TR_2"/>
    <property type="match status" value="1"/>
</dbReference>
<dbReference type="PROSITE" id="PS01176">
    <property type="entry name" value="IF2"/>
    <property type="match status" value="1"/>
</dbReference>
<name>IF2_CARHZ</name>
<organism>
    <name type="scientific">Carboxydothermus hydrogenoformans (strain ATCC BAA-161 / DSM 6008 / Z-2901)</name>
    <dbReference type="NCBI Taxonomy" id="246194"/>
    <lineage>
        <taxon>Bacteria</taxon>
        <taxon>Bacillati</taxon>
        <taxon>Bacillota</taxon>
        <taxon>Clostridia</taxon>
        <taxon>Thermoanaerobacterales</taxon>
        <taxon>Thermoanaerobacteraceae</taxon>
        <taxon>Carboxydothermus</taxon>
    </lineage>
</organism>
<keyword id="KW-0963">Cytoplasm</keyword>
<keyword id="KW-0342">GTP-binding</keyword>
<keyword id="KW-0396">Initiation factor</keyword>
<keyword id="KW-0547">Nucleotide-binding</keyword>
<keyword id="KW-0648">Protein biosynthesis</keyword>
<keyword id="KW-1185">Reference proteome</keyword>
<comment type="function">
    <text evidence="2">One of the essential components for the initiation of protein synthesis. Protects formylmethionyl-tRNA from spontaneous hydrolysis and promotes its binding to the 30S ribosomal subunits. Also involved in the hydrolysis of GTP during the formation of the 70S ribosomal complex.</text>
</comment>
<comment type="subcellular location">
    <subcellularLocation>
        <location evidence="2">Cytoplasm</location>
    </subcellularLocation>
</comment>
<comment type="similarity">
    <text evidence="2">Belongs to the TRAFAC class translation factor GTPase superfamily. Classic translation factor GTPase family. IF-2 subfamily.</text>
</comment>